<accession>A0PSX2</accession>
<gene>
    <name evidence="1" type="primary">der</name>
    <name type="synonym">engA</name>
    <name type="ordered locus">MUL_3232</name>
</gene>
<keyword id="KW-0342">GTP-binding</keyword>
<keyword id="KW-0547">Nucleotide-binding</keyword>
<keyword id="KW-0677">Repeat</keyword>
<keyword id="KW-0690">Ribosome biogenesis</keyword>
<feature type="chain" id="PRO_1000011673" description="GTPase Der">
    <location>
        <begin position="1"/>
        <end position="469"/>
    </location>
</feature>
<feature type="domain" description="EngA-type G 1">
    <location>
        <begin position="30"/>
        <end position="193"/>
    </location>
</feature>
<feature type="domain" description="EngA-type G 2">
    <location>
        <begin position="203"/>
        <end position="376"/>
    </location>
</feature>
<feature type="domain" description="KH-like" evidence="1">
    <location>
        <begin position="377"/>
        <end position="459"/>
    </location>
</feature>
<feature type="binding site" evidence="1">
    <location>
        <begin position="36"/>
        <end position="43"/>
    </location>
    <ligand>
        <name>GTP</name>
        <dbReference type="ChEBI" id="CHEBI:37565"/>
        <label>1</label>
    </ligand>
</feature>
<feature type="binding site" evidence="1">
    <location>
        <begin position="83"/>
        <end position="87"/>
    </location>
    <ligand>
        <name>GTP</name>
        <dbReference type="ChEBI" id="CHEBI:37565"/>
        <label>1</label>
    </ligand>
</feature>
<feature type="binding site" evidence="1">
    <location>
        <begin position="145"/>
        <end position="148"/>
    </location>
    <ligand>
        <name>GTP</name>
        <dbReference type="ChEBI" id="CHEBI:37565"/>
        <label>1</label>
    </ligand>
</feature>
<feature type="binding site" evidence="1">
    <location>
        <begin position="209"/>
        <end position="216"/>
    </location>
    <ligand>
        <name>GTP</name>
        <dbReference type="ChEBI" id="CHEBI:37565"/>
        <label>2</label>
    </ligand>
</feature>
<feature type="binding site" evidence="1">
    <location>
        <begin position="256"/>
        <end position="260"/>
    </location>
    <ligand>
        <name>GTP</name>
        <dbReference type="ChEBI" id="CHEBI:37565"/>
        <label>2</label>
    </ligand>
</feature>
<feature type="binding site" evidence="1">
    <location>
        <begin position="321"/>
        <end position="324"/>
    </location>
    <ligand>
        <name>GTP</name>
        <dbReference type="ChEBI" id="CHEBI:37565"/>
        <label>2</label>
    </ligand>
</feature>
<reference key="1">
    <citation type="journal article" date="2007" name="Genome Res.">
        <title>Reductive evolution and niche adaptation inferred from the genome of Mycobacterium ulcerans, the causative agent of Buruli ulcer.</title>
        <authorList>
            <person name="Stinear T.P."/>
            <person name="Seemann T."/>
            <person name="Pidot S."/>
            <person name="Frigui W."/>
            <person name="Reysset G."/>
            <person name="Garnier T."/>
            <person name="Meurice G."/>
            <person name="Simon D."/>
            <person name="Bouchier C."/>
            <person name="Ma L."/>
            <person name="Tichit M."/>
            <person name="Porter J.L."/>
            <person name="Ryan J."/>
            <person name="Johnson P.D.R."/>
            <person name="Davies J.K."/>
            <person name="Jenkin G.A."/>
            <person name="Small P.L.C."/>
            <person name="Jones L.M."/>
            <person name="Tekaia F."/>
            <person name="Laval F."/>
            <person name="Daffe M."/>
            <person name="Parkhill J."/>
            <person name="Cole S.T."/>
        </authorList>
    </citation>
    <scope>NUCLEOTIDE SEQUENCE [LARGE SCALE GENOMIC DNA]</scope>
    <source>
        <strain>Agy99</strain>
    </source>
</reference>
<evidence type="ECO:0000255" key="1">
    <source>
        <dbReference type="HAMAP-Rule" id="MF_00195"/>
    </source>
</evidence>
<proteinExistence type="inferred from homology"/>
<protein>
    <recommendedName>
        <fullName evidence="1">GTPase Der</fullName>
    </recommendedName>
    <alternativeName>
        <fullName evidence="1">GTP-binding protein EngA</fullName>
    </alternativeName>
</protein>
<sequence>MTQDGTWSDESDWELDDADLADLAEAAPAPVLAIVGRPNVGKSTLVNRILGRREAVVQDIPGVTRDRVSYDALWNGRRFVVQDTGGWEPDAKGLQQLVAEQASVAMRTADAVVLVVDATVGATTADEAAARILLRSGKPVFLAANKVDSDKAEADAATLWSMGLGEPHAISAMHGRGVANLLDTVLKKLPEVAESVSAGGGPRRVALVGKPNVGKSSLLNKLAGDERSVVHDVAGTTVDPVDSLIELGGKVWRFVDTAGLRRKVGQASGHEFYASVRTRGAIDAAEVVVLLIDASQPLTEQDLRVLSMVIEAGRAVVLAYNKWDLVDEDRRDLLDREIDRELVQIRWAQRVNISAKTGRAVQKLVPAMETALASWDTRIPTGPLNSWIKEVVAATPPPVRGGKQPRILFATQATARPPTFVLFTTGFLEAGYRRFLERRLRETFGFEGSPIRINVRVREKRGAKRPGRR</sequence>
<name>DER_MYCUA</name>
<comment type="function">
    <text evidence="1">GTPase that plays an essential role in the late steps of ribosome biogenesis.</text>
</comment>
<comment type="subunit">
    <text evidence="1">Associates with the 50S ribosomal subunit.</text>
</comment>
<comment type="similarity">
    <text evidence="1">Belongs to the TRAFAC class TrmE-Era-EngA-EngB-Septin-like GTPase superfamily. EngA (Der) GTPase family.</text>
</comment>
<organism>
    <name type="scientific">Mycobacterium ulcerans (strain Agy99)</name>
    <dbReference type="NCBI Taxonomy" id="362242"/>
    <lineage>
        <taxon>Bacteria</taxon>
        <taxon>Bacillati</taxon>
        <taxon>Actinomycetota</taxon>
        <taxon>Actinomycetes</taxon>
        <taxon>Mycobacteriales</taxon>
        <taxon>Mycobacteriaceae</taxon>
        <taxon>Mycobacterium</taxon>
        <taxon>Mycobacterium ulcerans group</taxon>
    </lineage>
</organism>
<dbReference type="EMBL" id="CP000325">
    <property type="protein sequence ID" value="ABL05441.1"/>
    <property type="molecule type" value="Genomic_DNA"/>
</dbReference>
<dbReference type="RefSeq" id="WP_011741051.1">
    <property type="nucleotide sequence ID" value="NC_008611.1"/>
</dbReference>
<dbReference type="SMR" id="A0PSX2"/>
<dbReference type="KEGG" id="mul:MUL_3232"/>
<dbReference type="eggNOG" id="COG1160">
    <property type="taxonomic scope" value="Bacteria"/>
</dbReference>
<dbReference type="HOGENOM" id="CLU_016077_6_2_11"/>
<dbReference type="Proteomes" id="UP000000765">
    <property type="component" value="Chromosome"/>
</dbReference>
<dbReference type="GO" id="GO:0016887">
    <property type="term" value="F:ATP hydrolysis activity"/>
    <property type="evidence" value="ECO:0007669"/>
    <property type="project" value="InterPro"/>
</dbReference>
<dbReference type="GO" id="GO:0005525">
    <property type="term" value="F:GTP binding"/>
    <property type="evidence" value="ECO:0007669"/>
    <property type="project" value="UniProtKB-UniRule"/>
</dbReference>
<dbReference type="GO" id="GO:0043022">
    <property type="term" value="F:ribosome binding"/>
    <property type="evidence" value="ECO:0007669"/>
    <property type="project" value="TreeGrafter"/>
</dbReference>
<dbReference type="GO" id="GO:0042254">
    <property type="term" value="P:ribosome biogenesis"/>
    <property type="evidence" value="ECO:0007669"/>
    <property type="project" value="UniProtKB-KW"/>
</dbReference>
<dbReference type="CDD" id="cd01894">
    <property type="entry name" value="EngA1"/>
    <property type="match status" value="1"/>
</dbReference>
<dbReference type="CDD" id="cd01895">
    <property type="entry name" value="EngA2"/>
    <property type="match status" value="1"/>
</dbReference>
<dbReference type="FunFam" id="3.30.300.20:FF:000004">
    <property type="entry name" value="GTPase Der"/>
    <property type="match status" value="1"/>
</dbReference>
<dbReference type="FunFam" id="3.40.50.300:FF:000040">
    <property type="entry name" value="GTPase Der"/>
    <property type="match status" value="1"/>
</dbReference>
<dbReference type="FunFam" id="3.40.50.300:FF:000057">
    <property type="entry name" value="GTPase Der"/>
    <property type="match status" value="1"/>
</dbReference>
<dbReference type="Gene3D" id="3.30.300.20">
    <property type="match status" value="1"/>
</dbReference>
<dbReference type="Gene3D" id="3.40.50.300">
    <property type="entry name" value="P-loop containing nucleotide triphosphate hydrolases"/>
    <property type="match status" value="2"/>
</dbReference>
<dbReference type="HAMAP" id="MF_00195">
    <property type="entry name" value="GTPase_Der"/>
    <property type="match status" value="1"/>
</dbReference>
<dbReference type="InterPro" id="IPR003593">
    <property type="entry name" value="AAA+_ATPase"/>
</dbReference>
<dbReference type="InterPro" id="IPR031166">
    <property type="entry name" value="G_ENGA"/>
</dbReference>
<dbReference type="InterPro" id="IPR006073">
    <property type="entry name" value="GTP-bd"/>
</dbReference>
<dbReference type="InterPro" id="IPR016484">
    <property type="entry name" value="GTPase_Der"/>
</dbReference>
<dbReference type="InterPro" id="IPR032859">
    <property type="entry name" value="KH_dom-like"/>
</dbReference>
<dbReference type="InterPro" id="IPR015946">
    <property type="entry name" value="KH_dom-like_a/b"/>
</dbReference>
<dbReference type="InterPro" id="IPR027417">
    <property type="entry name" value="P-loop_NTPase"/>
</dbReference>
<dbReference type="InterPro" id="IPR005225">
    <property type="entry name" value="Small_GTP-bd"/>
</dbReference>
<dbReference type="NCBIfam" id="TIGR03594">
    <property type="entry name" value="GTPase_EngA"/>
    <property type="match status" value="1"/>
</dbReference>
<dbReference type="NCBIfam" id="NF002828">
    <property type="entry name" value="PRK03003.1"/>
    <property type="match status" value="1"/>
</dbReference>
<dbReference type="NCBIfam" id="TIGR00231">
    <property type="entry name" value="small_GTP"/>
    <property type="match status" value="2"/>
</dbReference>
<dbReference type="PANTHER" id="PTHR43834">
    <property type="entry name" value="GTPASE DER"/>
    <property type="match status" value="1"/>
</dbReference>
<dbReference type="PANTHER" id="PTHR43834:SF6">
    <property type="entry name" value="GTPASE DER"/>
    <property type="match status" value="1"/>
</dbReference>
<dbReference type="Pfam" id="PF14714">
    <property type="entry name" value="KH_dom-like"/>
    <property type="match status" value="1"/>
</dbReference>
<dbReference type="Pfam" id="PF01926">
    <property type="entry name" value="MMR_HSR1"/>
    <property type="match status" value="2"/>
</dbReference>
<dbReference type="PIRSF" id="PIRSF006485">
    <property type="entry name" value="GTP-binding_EngA"/>
    <property type="match status" value="1"/>
</dbReference>
<dbReference type="PRINTS" id="PR00326">
    <property type="entry name" value="GTP1OBG"/>
</dbReference>
<dbReference type="SMART" id="SM00382">
    <property type="entry name" value="AAA"/>
    <property type="match status" value="2"/>
</dbReference>
<dbReference type="SUPFAM" id="SSF52540">
    <property type="entry name" value="P-loop containing nucleoside triphosphate hydrolases"/>
    <property type="match status" value="2"/>
</dbReference>
<dbReference type="PROSITE" id="PS51712">
    <property type="entry name" value="G_ENGA"/>
    <property type="match status" value="2"/>
</dbReference>